<protein>
    <recommendedName>
        <fullName evidence="2">Polistes-protonectin</fullName>
    </recommendedName>
</protein>
<dbReference type="GO" id="GO:0031640">
    <property type="term" value="P:killing of cells of another organism"/>
    <property type="evidence" value="ECO:0007669"/>
    <property type="project" value="UniProtKB-KW"/>
</dbReference>
<reference key="1">
    <citation type="journal article" date="2006" name="Biol. Pharm. Bull.">
        <title>Novel biologically active peptides from the venom of Polistes rothneyi iwatai.</title>
        <authorList>
            <person name="Murata K."/>
            <person name="Shinada T."/>
            <person name="Ohfune Y."/>
            <person name="Hisada M."/>
            <person name="Yasuda A."/>
            <person name="Naoki H."/>
            <person name="Nakajima T."/>
        </authorList>
    </citation>
    <scope>PROTEIN SEQUENCE</scope>
    <scope>FUNCTION</scope>
    <scope>SUBCELLULAR LOCATION</scope>
    <scope>AMIDATION AT LEU-12</scope>
    <scope>MASS SPECTROMETRY</scope>
    <source>
        <strain>Subsp. iwatai</strain>
        <tissue>Venom</tissue>
    </source>
</reference>
<name>PROT_POLRT</name>
<sequence>ILSALLGLLKSL</sequence>
<keyword id="KW-0027">Amidation</keyword>
<keyword id="KW-0204">Cytolysis</keyword>
<keyword id="KW-0903">Direct protein sequencing</keyword>
<evidence type="ECO:0000269" key="1">
    <source>
    </source>
</evidence>
<evidence type="ECO:0000303" key="2">
    <source>
    </source>
</evidence>
<evidence type="ECO:0000305" key="3"/>
<evidence type="ECO:0000305" key="4">
    <source>
    </source>
</evidence>
<feature type="peptide" id="PRO_0000458783" description="Polistes-protonectin" evidence="1">
    <location>
        <begin position="1"/>
        <end position="12"/>
    </location>
</feature>
<feature type="modified residue" description="Leucine amide" evidence="1">
    <location>
        <position position="12"/>
    </location>
</feature>
<comment type="function">
    <text evidence="1">Shows high hemolytic activity (97% sheep erythrocytes lysis at 50 mM).</text>
</comment>
<comment type="tissue specificity">
    <text evidence="4">Expressed by the venom gland.</text>
</comment>
<comment type="mass spectrometry"/>
<comment type="similarity">
    <text evidence="3">Belongs to the MCD family. Mastoparan subfamily.</text>
</comment>
<proteinExistence type="evidence at protein level"/>
<organism>
    <name type="scientific">Polistes rothneyi</name>
    <name type="common">Rothney's paper wasp</name>
    <dbReference type="NCBI Taxonomy" id="30208"/>
    <lineage>
        <taxon>Eukaryota</taxon>
        <taxon>Metazoa</taxon>
        <taxon>Ecdysozoa</taxon>
        <taxon>Arthropoda</taxon>
        <taxon>Hexapoda</taxon>
        <taxon>Insecta</taxon>
        <taxon>Pterygota</taxon>
        <taxon>Neoptera</taxon>
        <taxon>Endopterygota</taxon>
        <taxon>Hymenoptera</taxon>
        <taxon>Apocrita</taxon>
        <taxon>Aculeata</taxon>
        <taxon>Vespoidea</taxon>
        <taxon>Vespidae</taxon>
        <taxon>Polistinae</taxon>
        <taxon>Polistini</taxon>
        <taxon>Polistes</taxon>
    </lineage>
</organism>
<accession>P0DX38</accession>